<dbReference type="EMBL" id="AC148990">
    <property type="status" value="NOT_ANNOTATED_CDS"/>
    <property type="molecule type" value="Genomic_DNA"/>
</dbReference>
<dbReference type="EMBL" id="AC151733">
    <property type="status" value="NOT_ANNOTATED_CDS"/>
    <property type="molecule type" value="Genomic_DNA"/>
</dbReference>
<dbReference type="CCDS" id="CCDS39780.1"/>
<dbReference type="RefSeq" id="NP_001074887.1">
    <property type="nucleotide sequence ID" value="NM_001081418.1"/>
</dbReference>
<dbReference type="RefSeq" id="XP_006539980.1">
    <property type="nucleotide sequence ID" value="XM_006539917.5"/>
</dbReference>
<dbReference type="SMR" id="F8VPZ9"/>
<dbReference type="ComplexPortal" id="CPX-4202">
    <property type="entry name" value="GBAF (SWI/SNF) ATP-dependent chromatin remodeling complex, ACTL6A-BICRA-SMARCA2 variant"/>
</dbReference>
<dbReference type="ComplexPortal" id="CPX-4221">
    <property type="entry name" value="GBAF (SWI/SNF) ATP-dependent chromatin remodeling complex, ACTL6A-BICRA-SMARCA4 variant"/>
</dbReference>
<dbReference type="ComplexPortal" id="CPX-4227">
    <property type="entry name" value="GBAF (SWI/SNF) ATP-dependent chromatin remodeling complex, ACTL6B-BICRA-SMARCA2 variant"/>
</dbReference>
<dbReference type="ComplexPortal" id="CPX-4229">
    <property type="entry name" value="GBAF (SWI/SNF) ATP-dependent chromatin remodeling complex, ACTL6B-BICRA-SMARCA4 variant"/>
</dbReference>
<dbReference type="FunCoup" id="F8VPZ9">
    <property type="interactions" value="837"/>
</dbReference>
<dbReference type="STRING" id="10090.ENSMUSP00000148012"/>
<dbReference type="GlyGen" id="F8VPZ9">
    <property type="glycosylation" value="10 sites, 1 O-linked glycan (1 site)"/>
</dbReference>
<dbReference type="iPTMnet" id="F8VPZ9"/>
<dbReference type="PhosphoSitePlus" id="F8VPZ9"/>
<dbReference type="jPOST" id="F8VPZ9"/>
<dbReference type="PaxDb" id="10090-ENSMUSP00000092416"/>
<dbReference type="PeptideAtlas" id="F8VPZ9"/>
<dbReference type="ProteomicsDB" id="333221"/>
<dbReference type="Pumba" id="F8VPZ9"/>
<dbReference type="Antibodypedia" id="65070">
    <property type="antibodies" value="78 antibodies from 17 providers"/>
</dbReference>
<dbReference type="DNASU" id="243842"/>
<dbReference type="Ensembl" id="ENSMUST00000094821.4">
    <property type="protein sequence ID" value="ENSMUSP00000092416.4"/>
    <property type="gene ID" value="ENSMUSG00000070808.5"/>
</dbReference>
<dbReference type="Ensembl" id="ENSMUST00000210781.2">
    <property type="protein sequence ID" value="ENSMUSP00000148012.2"/>
    <property type="gene ID" value="ENSMUSG00000070808.5"/>
</dbReference>
<dbReference type="GeneID" id="243842"/>
<dbReference type="KEGG" id="mmu:243842"/>
<dbReference type="UCSC" id="uc009fgu.1">
    <property type="organism name" value="mouse"/>
</dbReference>
<dbReference type="AGR" id="MGI:2154263"/>
<dbReference type="CTD" id="29998"/>
<dbReference type="MGI" id="MGI:2154263">
    <property type="gene designation" value="Bicra"/>
</dbReference>
<dbReference type="VEuPathDB" id="HostDB:ENSMUSG00000070808"/>
<dbReference type="eggNOG" id="ENOG502QU2K">
    <property type="taxonomic scope" value="Eukaryota"/>
</dbReference>
<dbReference type="GeneTree" id="ENSGT00940000159112"/>
<dbReference type="HOGENOM" id="CLU_002283_0_0_1"/>
<dbReference type="InParanoid" id="F8VPZ9"/>
<dbReference type="OMA" id="FERVSCQ"/>
<dbReference type="OrthoDB" id="2556847at2759"/>
<dbReference type="PhylomeDB" id="F8VPZ9"/>
<dbReference type="TreeFam" id="TF335495"/>
<dbReference type="BioGRID-ORCS" id="243842">
    <property type="hits" value="9 hits in 76 CRISPR screens"/>
</dbReference>
<dbReference type="ChiTaRS" id="Bicra">
    <property type="organism name" value="mouse"/>
</dbReference>
<dbReference type="PRO" id="PR:F8VPZ9"/>
<dbReference type="Proteomes" id="UP000000589">
    <property type="component" value="Chromosome 7"/>
</dbReference>
<dbReference type="RNAct" id="F8VPZ9">
    <property type="molecule type" value="protein"/>
</dbReference>
<dbReference type="Bgee" id="ENSMUSG00000070808">
    <property type="expression patterns" value="Expressed in embryonic brain and 216 other cell types or tissues"/>
</dbReference>
<dbReference type="GO" id="GO:0000785">
    <property type="term" value="C:chromatin"/>
    <property type="evidence" value="ECO:0000303"/>
    <property type="project" value="ComplexPortal"/>
</dbReference>
<dbReference type="GO" id="GO:0140288">
    <property type="term" value="C:GBAF complex"/>
    <property type="evidence" value="ECO:0000303"/>
    <property type="project" value="ComplexPortal"/>
</dbReference>
<dbReference type="GO" id="GO:0016514">
    <property type="term" value="C:SWI/SNF complex"/>
    <property type="evidence" value="ECO:0000314"/>
    <property type="project" value="UniProtKB"/>
</dbReference>
<dbReference type="GO" id="GO:0140537">
    <property type="term" value="F:transcription regulator activator activity"/>
    <property type="evidence" value="ECO:0007669"/>
    <property type="project" value="Ensembl"/>
</dbReference>
<dbReference type="GO" id="GO:0006338">
    <property type="term" value="P:chromatin remodeling"/>
    <property type="evidence" value="ECO:0000303"/>
    <property type="project" value="ComplexPortal"/>
</dbReference>
<dbReference type="GO" id="GO:0045596">
    <property type="term" value="P:negative regulation of cell differentiation"/>
    <property type="evidence" value="ECO:0000303"/>
    <property type="project" value="ComplexPortal"/>
</dbReference>
<dbReference type="GO" id="GO:0008284">
    <property type="term" value="P:positive regulation of cell population proliferation"/>
    <property type="evidence" value="ECO:0000303"/>
    <property type="project" value="ComplexPortal"/>
</dbReference>
<dbReference type="GO" id="GO:0045893">
    <property type="term" value="P:positive regulation of DNA-templated transcription"/>
    <property type="evidence" value="ECO:0007669"/>
    <property type="project" value="Ensembl"/>
</dbReference>
<dbReference type="GO" id="GO:1902459">
    <property type="term" value="P:positive regulation of stem cell population maintenance"/>
    <property type="evidence" value="ECO:0000303"/>
    <property type="project" value="ComplexPortal"/>
</dbReference>
<dbReference type="GO" id="GO:0006357">
    <property type="term" value="P:regulation of transcription by RNA polymerase II"/>
    <property type="evidence" value="ECO:0000303"/>
    <property type="project" value="ComplexPortal"/>
</dbReference>
<dbReference type="InterPro" id="IPR052438">
    <property type="entry name" value="Chromatin_remod/trans_coact"/>
</dbReference>
<dbReference type="InterPro" id="IPR015671">
    <property type="entry name" value="GSCR1_dom"/>
</dbReference>
<dbReference type="PANTHER" id="PTHR15572:SF1">
    <property type="entry name" value="BRD4-INTERACTING CHROMATIN-REMODELING COMPLEX-ASSOCIATED PROTEIN"/>
    <property type="match status" value="1"/>
</dbReference>
<dbReference type="PANTHER" id="PTHR15572">
    <property type="entry name" value="GLIOMA TUMOR SUPPRESSOR CANDIDATE REGION GENE 1"/>
    <property type="match status" value="1"/>
</dbReference>
<dbReference type="Pfam" id="PF15249">
    <property type="entry name" value="GLTSCR1"/>
    <property type="match status" value="1"/>
</dbReference>
<gene>
    <name evidence="5" type="primary">Bicra</name>
    <name evidence="5" type="synonym">Gltscr1</name>
</gene>
<reference key="1">
    <citation type="journal article" date="2009" name="PLoS Biol.">
        <title>Lineage-specific biology revealed by a finished genome assembly of the mouse.</title>
        <authorList>
            <person name="Church D.M."/>
            <person name="Goodstadt L."/>
            <person name="Hillier L.W."/>
            <person name="Zody M.C."/>
            <person name="Goldstein S."/>
            <person name="She X."/>
            <person name="Bult C.J."/>
            <person name="Agarwala R."/>
            <person name="Cherry J.L."/>
            <person name="DiCuccio M."/>
            <person name="Hlavina W."/>
            <person name="Kapustin Y."/>
            <person name="Meric P."/>
            <person name="Maglott D."/>
            <person name="Birtle Z."/>
            <person name="Marques A.C."/>
            <person name="Graves T."/>
            <person name="Zhou S."/>
            <person name="Teague B."/>
            <person name="Potamousis K."/>
            <person name="Churas C."/>
            <person name="Place M."/>
            <person name="Herschleb J."/>
            <person name="Runnheim R."/>
            <person name="Forrest D."/>
            <person name="Amos-Landgraf J."/>
            <person name="Schwartz D.C."/>
            <person name="Cheng Z."/>
            <person name="Lindblad-Toh K."/>
            <person name="Eichler E.E."/>
            <person name="Ponting C.P."/>
        </authorList>
    </citation>
    <scope>NUCLEOTIDE SEQUENCE [LARGE SCALE GENOMIC DNA]</scope>
    <source>
        <strain>C57BL/6J</strain>
    </source>
</reference>
<reference evidence="6" key="2">
    <citation type="journal article" date="2010" name="Cell">
        <title>A tissue-specific atlas of mouse protein phosphorylation and expression.</title>
        <authorList>
            <person name="Huttlin E.L."/>
            <person name="Jedrychowski M.P."/>
            <person name="Elias J.E."/>
            <person name="Goswami T."/>
            <person name="Rad R."/>
            <person name="Beausoleil S.A."/>
            <person name="Villen J."/>
            <person name="Haas W."/>
            <person name="Sowa M.E."/>
            <person name="Gygi S.P."/>
        </authorList>
    </citation>
    <scope>IDENTIFICATION BY MASS SPECTROMETRY [LARGE SCALE ANALYSIS]</scope>
</reference>
<reference key="3">
    <citation type="submission" date="2011-07" db="UniProtKB">
        <authorList>
            <consortium name="Ensembl"/>
        </authorList>
    </citation>
    <scope>IDENTIFICATION</scope>
    <source>
        <strain>C57BL/6J</strain>
    </source>
</reference>
<reference evidence="7" key="4">
    <citation type="journal article" date="2013" name="Mol. Cell">
        <title>SIRT5-mediated lysine desuccinylation impacts diverse metabolic pathways.</title>
        <authorList>
            <person name="Park J."/>
            <person name="Chen Y."/>
            <person name="Tishkoff D.X."/>
            <person name="Peng C."/>
            <person name="Tan M."/>
            <person name="Dai L."/>
            <person name="Xie Z."/>
            <person name="Zhang Y."/>
            <person name="Zwaans B.M."/>
            <person name="Skinner M.E."/>
            <person name="Lombard D.B."/>
            <person name="Zhao Y."/>
        </authorList>
    </citation>
    <scope>IDENTIFICATION BY MASS SPECTROMETRY [LARGE SCALE ANALYSIS]</scope>
</reference>
<reference key="5">
    <citation type="submission" date="2016-07" db="UniProtKB">
        <authorList>
            <consortium name="Ensembl"/>
        </authorList>
    </citation>
    <scope>IDENTIFICATION</scope>
    <source>
        <strain>C57BL/6J</strain>
    </source>
</reference>
<reference key="6">
    <citation type="journal article" date="2018" name="J. Biol. Chem.">
        <title>Glioma tumor suppressor candidate region gene 1 (GLTSCR1) and its paralog GLTSCR1-like form SWI/SNF chromatin remodeling subcomplexes.</title>
        <authorList>
            <person name="Alpsoy A."/>
            <person name="Dykhuizen E.C."/>
        </authorList>
    </citation>
    <scope>IDENTIFICATION IN THE GBAF COMPLEX</scope>
</reference>
<protein>
    <recommendedName>
        <fullName evidence="4">BRD4-interacting chromatin-remodeling complex-associated protein</fullName>
    </recommendedName>
    <alternativeName>
        <fullName evidence="4">Glioma tumor suppressor candidate region gene 1 protein</fullName>
    </alternativeName>
</protein>
<name>BICRA_MOUSE</name>
<organism>
    <name type="scientific">Mus musculus</name>
    <name type="common">Mouse</name>
    <dbReference type="NCBI Taxonomy" id="10090"/>
    <lineage>
        <taxon>Eukaryota</taxon>
        <taxon>Metazoa</taxon>
        <taxon>Chordata</taxon>
        <taxon>Craniata</taxon>
        <taxon>Vertebrata</taxon>
        <taxon>Euteleostomi</taxon>
        <taxon>Mammalia</taxon>
        <taxon>Eutheria</taxon>
        <taxon>Euarchontoglires</taxon>
        <taxon>Glires</taxon>
        <taxon>Rodentia</taxon>
        <taxon>Myomorpha</taxon>
        <taxon>Muroidea</taxon>
        <taxon>Muridae</taxon>
        <taxon>Murinae</taxon>
        <taxon>Mus</taxon>
        <taxon>Mus</taxon>
    </lineage>
</organism>
<proteinExistence type="evidence at protein level"/>
<sequence length="1578" mass="161354">MDDEDGRCLLDVICDPQALNDFLHGSEKLDSDDLLDAPVEAQSAFYEGPGLHVQEAAANHLNPEPSQPAPSVDLDFLEDDILGSPAAGGGGGGGGAPDQPCDILQQSLQEANITEQTLEAEAELDLGPFQLPTLQPADNGAGATGAAGATAVTAGPQALFPGSADLLGLQAPPTVLTHQALVPPQDVVNKALSVQPFLQPVGLGNVTLQPISGLQGLPNGSPGNAAAATLGLTPIQVVGQPVMALNPPTSQLLAKQVPVSGYLASAAGPSEPVTLASAGVSPQGAGLVIQKNLPAAVTTTLNGNSVFAGTGAATAAASGAPSGQPLAVAPGLGTSPLVQAPSVILHRTPTPIQPKPTGVLPSKLYQLTPKPFPPTGATLTIQGEPGTLPQQPKAPQNLTFMATGKAGQNVVLSGFPAPALQANVFKQPPVTTTGTAPPQPPGALSKPMSVHLLNQGSSIVIPAQHMLPGQNQFLLPGTPAVQLPQSLSALPANVGGQILTAAAPHAGGQLIANPILTNQNLAGPLSLGPVLAPHSGAHSAAHILSAAPIQVGQPALFQMPVSLATGSLPTQSQPAPTGPTATTVLQGVTLPPSAVAMLNTPDGLVQPSTPAATTGEATPVLAVQPATQVPPAVTTPLPMGLQQPQAQQPPQVPTPQAATQPQATPPQASPSLASSPEKIVLGQAPPAATTAILTQDSLQMFLPQERSQQPLSTEGPHLSVPASVIVSAPPPAQDPALATPVTKGAGLGAQTPDSRASPAPAPQIPAAAPLKAPGPASSPSLPHQAPLGDSPHMPSPHPARPPSRPPSRPHSRPPSQPQSLTCPPSEPTLHPCPPPQGPPTLPGIFVIQNQLGAPPPASTPASTAPGPPQPPLRPPSQPPEGPLPPASHLPPASTPSAVASSSEPSARLPVPTPPDFQLQFPPSQGPHKSPTPPPALHMVPEPTAPPPPPPRTFQMVTAPFPALPQPKALLERFHQVPSGIILQNKAGGTPTTPQTSTTLGTLTGPTASVLVSGQAPPGTPAASSHVPASTPMATTGLPPLLPAENKAFASNLPTLSVAKATVSGPGKPPAIQYDSKLCSLKKQPLLQPSKEACFLEHLHKHQGSVLHPDYKTAFPSFEDALHRLLPYHVYQGALPSPNDYHKVDEEFETVSTQLLKRTQAMLNKYRLLLLEESRRVSPSAEMVMIDRMFIQEEKTTLALDKQLAKEKPDEYVSSSRSLGFPVPVSSEGHRLPSHGQSSSSSTSGTSAQPPPHLPTKLVIRHGGAGGSPSVTWARASSSLSSTSSSSSSSSAASSLDADEDGPMPTRNRPPIKTYEARSRIGLKLKIKQEAGLSKVVHNTALDPVHQPLPAPTPAKGAEPPPHPAPPPLPPATQAQMNGTLDHPPPAVRKPTVPASCPRLPLRKTYRENMGNPGAAEGAQGRPRGAGSPTPLPTKVDEATSGLIRELAAVEDELYQRVLKGGPPPPETPASATSQGPTEPSWEAPVLPPAKRRKSESPDVDQASFSSDSPQDDTLTEHLQSAIDSILNLQQAPGRTPAGPYPHTGPTPGTPTSPAPLHRPDAFPPSSHNGGLGARTLNR</sequence>
<accession>F8VPZ9</accession>
<keyword id="KW-0007">Acetylation</keyword>
<keyword id="KW-1017">Isopeptide bond</keyword>
<keyword id="KW-0539">Nucleus</keyword>
<keyword id="KW-0597">Phosphoprotein</keyword>
<keyword id="KW-1185">Reference proteome</keyword>
<keyword id="KW-0832">Ubl conjugation</keyword>
<comment type="function">
    <text evidence="1 3">Component of SWI/SNF chromatin remodeling subcomplex GBAF that carries out key enzymatic activities, changing chromatin structure by altering DNA-histone contacts within a nucleosome in an ATP-dependent manner (PubMed:29374058). May play a role in BRD4-mediated gene transcription (By similarity).</text>
</comment>
<comment type="subunit">
    <text evidence="1 3">Component of the multiprotein chromatin-remodeling complexes SWI/SNF: SWI/SNF-A (BAF), SWI/SNF-B (PBAF) and related complexes. The canonical complex contains a catalytic subunit (either SMARCA4/BRG1/BAF190A or SMARCA2/BRM/BAF190B) and at least SMARCE1, ACTL6A/BAF53, SMARCC1/BAF155, SMARCC2/BAF170, and SMARCB1/SNF5/BAF47. Other subunits specific to each of the complexes may also be present permitting several possible combinations developmentally and tissue specific. Component of the SWI/SNF (GBAF) subcomplex, which includes at least BICRA or BICRAL (mutually exclusive), BRD9, SS18, the core BAF subunits, SMARCA2/BRM, SMARCA4/BRG1/BAF190A, ACTL6A/BAF53, SMARCC1/BAF155, and SMARCD1/BAF60A (PubMed:29374058). Interacts with BRD4; the interaction bridges BRD4 to the GBAF complex (By similarity).</text>
</comment>
<comment type="subcellular location">
    <subcellularLocation>
        <location evidence="1">Nucleus</location>
    </subcellularLocation>
</comment>
<feature type="chain" id="PRO_0000445345" description="BRD4-interacting chromatin-remodeling complex-associated protein">
    <location>
        <begin position="1"/>
        <end position="1578"/>
    </location>
</feature>
<feature type="region of interest" description="Disordered" evidence="2">
    <location>
        <begin position="80"/>
        <end position="101"/>
    </location>
</feature>
<feature type="region of interest" description="Disordered" evidence="2">
    <location>
        <begin position="631"/>
        <end position="673"/>
    </location>
</feature>
<feature type="region of interest" description="Disordered" evidence="2">
    <location>
        <begin position="725"/>
        <end position="951"/>
    </location>
</feature>
<feature type="region of interest" description="Disordered" evidence="2">
    <location>
        <begin position="1206"/>
        <end position="1316"/>
    </location>
</feature>
<feature type="region of interest" description="Disordered" evidence="2">
    <location>
        <begin position="1342"/>
        <end position="1435"/>
    </location>
</feature>
<feature type="region of interest" description="Disordered" evidence="2">
    <location>
        <begin position="1457"/>
        <end position="1578"/>
    </location>
</feature>
<feature type="compositionally biased region" description="Gly residues" evidence="2">
    <location>
        <begin position="86"/>
        <end position="96"/>
    </location>
</feature>
<feature type="compositionally biased region" description="Low complexity" evidence="2">
    <location>
        <begin position="631"/>
        <end position="662"/>
    </location>
</feature>
<feature type="compositionally biased region" description="Low complexity" evidence="2">
    <location>
        <begin position="764"/>
        <end position="782"/>
    </location>
</feature>
<feature type="compositionally biased region" description="Pro residues" evidence="2">
    <location>
        <begin position="793"/>
        <end position="816"/>
    </location>
</feature>
<feature type="compositionally biased region" description="Pro residues" evidence="2">
    <location>
        <begin position="824"/>
        <end position="841"/>
    </location>
</feature>
<feature type="compositionally biased region" description="Pro residues" evidence="2">
    <location>
        <begin position="865"/>
        <end position="888"/>
    </location>
</feature>
<feature type="compositionally biased region" description="Low complexity" evidence="2">
    <location>
        <begin position="889"/>
        <end position="906"/>
    </location>
</feature>
<feature type="compositionally biased region" description="Pro residues" evidence="2">
    <location>
        <begin position="942"/>
        <end position="951"/>
    </location>
</feature>
<feature type="compositionally biased region" description="Low complexity" evidence="2">
    <location>
        <begin position="1233"/>
        <end position="1247"/>
    </location>
</feature>
<feature type="compositionally biased region" description="Low complexity" evidence="2">
    <location>
        <begin position="1275"/>
        <end position="1294"/>
    </location>
</feature>
<feature type="compositionally biased region" description="Pro residues" evidence="2">
    <location>
        <begin position="1346"/>
        <end position="1370"/>
    </location>
</feature>
<feature type="compositionally biased region" description="Polar residues" evidence="2">
    <location>
        <begin position="1502"/>
        <end position="1532"/>
    </location>
</feature>
<feature type="compositionally biased region" description="Pro residues" evidence="2">
    <location>
        <begin position="1538"/>
        <end position="1553"/>
    </location>
</feature>
<feature type="modified residue" description="Phosphoserine" evidence="1">
    <location>
        <position position="929"/>
    </location>
</feature>
<feature type="modified residue" description="Phosphothreonine" evidence="1">
    <location>
        <position position="931"/>
    </location>
</feature>
<feature type="modified residue" description="N6-acetyllysine" evidence="1">
    <location>
        <position position="1067"/>
    </location>
</feature>
<feature type="modified residue" description="Phosphoserine" evidence="1">
    <location>
        <position position="1427"/>
    </location>
</feature>
<feature type="cross-link" description="Glycyl lysine isopeptide (Lys-Gly) (interchain with G-Cter in SUMO2)" evidence="1">
    <location>
        <position position="1327"/>
    </location>
</feature>
<evidence type="ECO:0000250" key="1">
    <source>
        <dbReference type="UniProtKB" id="Q9NZM4"/>
    </source>
</evidence>
<evidence type="ECO:0000256" key="2">
    <source>
        <dbReference type="SAM" id="MobiDB-lite"/>
    </source>
</evidence>
<evidence type="ECO:0000269" key="3">
    <source>
    </source>
</evidence>
<evidence type="ECO:0000305" key="4"/>
<evidence type="ECO:0000312" key="5">
    <source>
        <dbReference type="MGI" id="MGI:2154263"/>
    </source>
</evidence>
<evidence type="ECO:0007744" key="6">
    <source>
    </source>
</evidence>
<evidence type="ECO:0007744" key="7">
    <source>
    </source>
</evidence>